<organism>
    <name type="scientific">Mycobacterium leprae (strain TN)</name>
    <dbReference type="NCBI Taxonomy" id="272631"/>
    <lineage>
        <taxon>Bacteria</taxon>
        <taxon>Bacillati</taxon>
        <taxon>Actinomycetota</taxon>
        <taxon>Actinomycetes</taxon>
        <taxon>Mycobacteriales</taxon>
        <taxon>Mycobacteriaceae</taxon>
        <taxon>Mycobacterium</taxon>
    </lineage>
</organism>
<comment type="function">
    <text evidence="1">Methylates the class 1 translation termination release factors RF1/PrfA and RF2/PrfB on the glutamine residue of the universally conserved GGQ motif.</text>
</comment>
<comment type="catalytic activity">
    <reaction evidence="1">
        <text>L-glutaminyl-[peptide chain release factor] + S-adenosyl-L-methionine = N(5)-methyl-L-glutaminyl-[peptide chain release factor] + S-adenosyl-L-homocysteine + H(+)</text>
        <dbReference type="Rhea" id="RHEA:42896"/>
        <dbReference type="Rhea" id="RHEA-COMP:10271"/>
        <dbReference type="Rhea" id="RHEA-COMP:10272"/>
        <dbReference type="ChEBI" id="CHEBI:15378"/>
        <dbReference type="ChEBI" id="CHEBI:30011"/>
        <dbReference type="ChEBI" id="CHEBI:57856"/>
        <dbReference type="ChEBI" id="CHEBI:59789"/>
        <dbReference type="ChEBI" id="CHEBI:61891"/>
        <dbReference type="EC" id="2.1.1.297"/>
    </reaction>
</comment>
<comment type="similarity">
    <text evidence="1">Belongs to the protein N5-glutamine methyltransferase family. PrmC subfamily.</text>
</comment>
<comment type="sequence caution" evidence="2">
    <conflict type="frameshift">
        <sequence resource="EMBL-CDS" id="AAA63096"/>
    </conflict>
</comment>
<feature type="chain" id="PRO_0000157165" description="Release factor glutamine methyltransferase">
    <location>
        <begin position="1"/>
        <end position="288"/>
    </location>
</feature>
<feature type="binding site" evidence="1">
    <location>
        <position position="142"/>
    </location>
    <ligand>
        <name>S-adenosyl-L-methionine</name>
        <dbReference type="ChEBI" id="CHEBI:59789"/>
    </ligand>
</feature>
<feature type="binding site" evidence="1">
    <location>
        <begin position="186"/>
        <end position="189"/>
    </location>
    <ligand>
        <name>substrate</name>
    </ligand>
</feature>
<feature type="binding site" evidence="1">
    <location>
        <position position="186"/>
    </location>
    <ligand>
        <name>S-adenosyl-L-methionine</name>
        <dbReference type="ChEBI" id="CHEBI:59789"/>
    </ligand>
</feature>
<evidence type="ECO:0000255" key="1">
    <source>
        <dbReference type="HAMAP-Rule" id="MF_02126"/>
    </source>
</evidence>
<evidence type="ECO:0000305" key="2"/>
<reference key="1">
    <citation type="submission" date="1994-09" db="EMBL/GenBank/DDBJ databases">
        <authorList>
            <person name="Smith D.R."/>
            <person name="Robison K."/>
        </authorList>
    </citation>
    <scope>NUCLEOTIDE SEQUENCE [GENOMIC DNA]</scope>
</reference>
<reference key="2">
    <citation type="journal article" date="2001" name="Nature">
        <title>Massive gene decay in the leprosy bacillus.</title>
        <authorList>
            <person name="Cole S.T."/>
            <person name="Eiglmeier K."/>
            <person name="Parkhill J."/>
            <person name="James K.D."/>
            <person name="Thomson N.R."/>
            <person name="Wheeler P.R."/>
            <person name="Honore N."/>
            <person name="Garnier T."/>
            <person name="Churcher C.M."/>
            <person name="Harris D.E."/>
            <person name="Mungall K.L."/>
            <person name="Basham D."/>
            <person name="Brown D."/>
            <person name="Chillingworth T."/>
            <person name="Connor R."/>
            <person name="Davies R.M."/>
            <person name="Devlin K."/>
            <person name="Duthoy S."/>
            <person name="Feltwell T."/>
            <person name="Fraser A."/>
            <person name="Hamlin N."/>
            <person name="Holroyd S."/>
            <person name="Hornsby T."/>
            <person name="Jagels K."/>
            <person name="Lacroix C."/>
            <person name="Maclean J."/>
            <person name="Moule S."/>
            <person name="Murphy L.D."/>
            <person name="Oliver K."/>
            <person name="Quail M.A."/>
            <person name="Rajandream M.A."/>
            <person name="Rutherford K.M."/>
            <person name="Rutter S."/>
            <person name="Seeger K."/>
            <person name="Simon S."/>
            <person name="Simmonds M."/>
            <person name="Skelton J."/>
            <person name="Squares R."/>
            <person name="Squares S."/>
            <person name="Stevens K."/>
            <person name="Taylor K."/>
            <person name="Whitehead S."/>
            <person name="Woodward J.R."/>
            <person name="Barrell B.G."/>
        </authorList>
    </citation>
    <scope>NUCLEOTIDE SEQUENCE [LARGE SCALE GENOMIC DNA]</scope>
    <source>
        <strain>TN</strain>
    </source>
</reference>
<sequence length="288" mass="31225">MMIRLRRAIDSAVTQLEEAGIGSARCDAEQLAAHLAGTDRGRLALLDTPGEEFFRRYSDAVAARSRRVPLQHLIGTVSFGPVVLHVGPDVFIPRPETEAILAWVMAQRLPERPVIVDACTGSGALAVALAHHRPAARVIGIDDSDSALDYARRNAEGTAVECVRADVTTPALLPELDGCVDLFVANPPYVPDDPVVQSILEPEVTQYDPRHAVFGGPDGMALTADIVGLAGRWLRPGGLFAVEHDDSTSVPTLDLVYRTDLFDDVLTHRDLAGRPRFVTARRRESWSA</sequence>
<protein>
    <recommendedName>
        <fullName evidence="1">Release factor glutamine methyltransferase</fullName>
        <shortName evidence="1">RF MTase</shortName>
        <ecNumber evidence="1">2.1.1.297</ecNumber>
    </recommendedName>
    <alternativeName>
        <fullName>M.MleHemKP</fullName>
    </alternativeName>
    <alternativeName>
        <fullName evidence="1">N5-glutamine methyltransferase PrmC</fullName>
    </alternativeName>
    <alternativeName>
        <fullName evidence="1">Protein-(glutamine-N5) MTase PrmC</fullName>
    </alternativeName>
    <alternativeName>
        <fullName evidence="1">Protein-glutamine N-methyltransferase PrmC</fullName>
    </alternativeName>
</protein>
<proteinExistence type="inferred from homology"/>
<keyword id="KW-0489">Methyltransferase</keyword>
<keyword id="KW-1185">Reference proteome</keyword>
<keyword id="KW-0949">S-adenosyl-L-methionine</keyword>
<keyword id="KW-0808">Transferase</keyword>
<gene>
    <name evidence="1" type="primary">prmC</name>
    <name type="synonym">hemK</name>
    <name type="ordered locus">ML1135</name>
</gene>
<accession>P45832</accession>
<dbReference type="EC" id="2.1.1.297" evidence="1"/>
<dbReference type="EMBL" id="U15186">
    <property type="protein sequence ID" value="AAA63096.1"/>
    <property type="status" value="ALT_FRAME"/>
    <property type="molecule type" value="Genomic_DNA"/>
</dbReference>
<dbReference type="EMBL" id="AL583920">
    <property type="protein sequence ID" value="CAC31516.1"/>
    <property type="molecule type" value="Genomic_DNA"/>
</dbReference>
<dbReference type="PIR" id="A87051">
    <property type="entry name" value="A87051"/>
</dbReference>
<dbReference type="RefSeq" id="NP_301829.1">
    <property type="nucleotide sequence ID" value="NC_002677.1"/>
</dbReference>
<dbReference type="RefSeq" id="WP_010908153.1">
    <property type="nucleotide sequence ID" value="NC_002677.1"/>
</dbReference>
<dbReference type="SMR" id="P45832"/>
<dbReference type="STRING" id="272631.gene:17574962"/>
<dbReference type="KEGG" id="mle:ML1135"/>
<dbReference type="PATRIC" id="fig|272631.5.peg.2057"/>
<dbReference type="Leproma" id="ML1135"/>
<dbReference type="eggNOG" id="COG2890">
    <property type="taxonomic scope" value="Bacteria"/>
</dbReference>
<dbReference type="HOGENOM" id="CLU_018398_4_0_11"/>
<dbReference type="OrthoDB" id="9800643at2"/>
<dbReference type="Proteomes" id="UP000000806">
    <property type="component" value="Chromosome"/>
</dbReference>
<dbReference type="GO" id="GO:0102559">
    <property type="term" value="F:protein-(glutamine-N5) methyltransferase activity"/>
    <property type="evidence" value="ECO:0007669"/>
    <property type="project" value="UniProtKB-EC"/>
</dbReference>
<dbReference type="GO" id="GO:0036009">
    <property type="term" value="F:protein-glutamine N-methyltransferase activity"/>
    <property type="evidence" value="ECO:0007669"/>
    <property type="project" value="UniProtKB-UniRule"/>
</dbReference>
<dbReference type="GO" id="GO:0032259">
    <property type="term" value="P:methylation"/>
    <property type="evidence" value="ECO:0007669"/>
    <property type="project" value="UniProtKB-KW"/>
</dbReference>
<dbReference type="CDD" id="cd02440">
    <property type="entry name" value="AdoMet_MTases"/>
    <property type="match status" value="1"/>
</dbReference>
<dbReference type="Gene3D" id="1.10.8.10">
    <property type="entry name" value="DNA helicase RuvA subunit, C-terminal domain"/>
    <property type="match status" value="1"/>
</dbReference>
<dbReference type="Gene3D" id="3.40.50.150">
    <property type="entry name" value="Vaccinia Virus protein VP39"/>
    <property type="match status" value="1"/>
</dbReference>
<dbReference type="HAMAP" id="MF_02126">
    <property type="entry name" value="RF_methyltr_PrmC"/>
    <property type="match status" value="1"/>
</dbReference>
<dbReference type="InterPro" id="IPR004556">
    <property type="entry name" value="HemK-like"/>
</dbReference>
<dbReference type="InterPro" id="IPR041698">
    <property type="entry name" value="Methyltransf_25"/>
</dbReference>
<dbReference type="InterPro" id="IPR050320">
    <property type="entry name" value="N5-glutamine_MTase"/>
</dbReference>
<dbReference type="InterPro" id="IPR040758">
    <property type="entry name" value="PrmC_N"/>
</dbReference>
<dbReference type="InterPro" id="IPR019874">
    <property type="entry name" value="RF_methyltr_PrmC"/>
</dbReference>
<dbReference type="InterPro" id="IPR029063">
    <property type="entry name" value="SAM-dependent_MTases_sf"/>
</dbReference>
<dbReference type="NCBIfam" id="TIGR00536">
    <property type="entry name" value="hemK_fam"/>
    <property type="match status" value="1"/>
</dbReference>
<dbReference type="NCBIfam" id="TIGR03534">
    <property type="entry name" value="RF_mod_PrmC"/>
    <property type="match status" value="1"/>
</dbReference>
<dbReference type="PANTHER" id="PTHR18895">
    <property type="entry name" value="HEMK METHYLTRANSFERASE"/>
    <property type="match status" value="1"/>
</dbReference>
<dbReference type="PANTHER" id="PTHR18895:SF74">
    <property type="entry name" value="MTRF1L RELEASE FACTOR GLUTAMINE METHYLTRANSFERASE"/>
    <property type="match status" value="1"/>
</dbReference>
<dbReference type="Pfam" id="PF13649">
    <property type="entry name" value="Methyltransf_25"/>
    <property type="match status" value="1"/>
</dbReference>
<dbReference type="Pfam" id="PF17827">
    <property type="entry name" value="PrmC_N"/>
    <property type="match status" value="1"/>
</dbReference>
<dbReference type="SUPFAM" id="SSF53335">
    <property type="entry name" value="S-adenosyl-L-methionine-dependent methyltransferases"/>
    <property type="match status" value="1"/>
</dbReference>
<name>PRMC_MYCLE</name>